<evidence type="ECO:0000255" key="1">
    <source>
        <dbReference type="HAMAP-Rule" id="MF_01356"/>
    </source>
</evidence>
<evidence type="ECO:0000305" key="2"/>
<feature type="chain" id="PRO_0000288707" description="NAD(P)H-quinone oxidoreductase subunit K, chloroplastic">
    <location>
        <begin position="1"/>
        <end position="225"/>
    </location>
</feature>
<feature type="binding site" evidence="1">
    <location>
        <position position="43"/>
    </location>
    <ligand>
        <name>[4Fe-4S] cluster</name>
        <dbReference type="ChEBI" id="CHEBI:49883"/>
    </ligand>
</feature>
<feature type="binding site" evidence="1">
    <location>
        <position position="44"/>
    </location>
    <ligand>
        <name>[4Fe-4S] cluster</name>
        <dbReference type="ChEBI" id="CHEBI:49883"/>
    </ligand>
</feature>
<feature type="binding site" evidence="1">
    <location>
        <position position="108"/>
    </location>
    <ligand>
        <name>[4Fe-4S] cluster</name>
        <dbReference type="ChEBI" id="CHEBI:49883"/>
    </ligand>
</feature>
<feature type="binding site" evidence="1">
    <location>
        <position position="139"/>
    </location>
    <ligand>
        <name>[4Fe-4S] cluster</name>
        <dbReference type="ChEBI" id="CHEBI:49883"/>
    </ligand>
</feature>
<feature type="sequence conflict" description="In Ref. 1; CAA34000." evidence="2" ref="1">
    <original>T</original>
    <variation>R</variation>
    <location>
        <position position="12"/>
    </location>
</feature>
<comment type="function">
    <text evidence="1">NDH shuttles electrons from NAD(P)H:plastoquinone, via FMN and iron-sulfur (Fe-S) centers, to quinones in the photosynthetic chain and possibly in a chloroplast respiratory chain. The immediate electron acceptor for the enzyme in this species is believed to be plastoquinone. Couples the redox reaction to proton translocation, and thus conserves the redox energy in a proton gradient.</text>
</comment>
<comment type="catalytic activity">
    <reaction evidence="1">
        <text>a plastoquinone + NADH + (n+1) H(+)(in) = a plastoquinol + NAD(+) + n H(+)(out)</text>
        <dbReference type="Rhea" id="RHEA:42608"/>
        <dbReference type="Rhea" id="RHEA-COMP:9561"/>
        <dbReference type="Rhea" id="RHEA-COMP:9562"/>
        <dbReference type="ChEBI" id="CHEBI:15378"/>
        <dbReference type="ChEBI" id="CHEBI:17757"/>
        <dbReference type="ChEBI" id="CHEBI:57540"/>
        <dbReference type="ChEBI" id="CHEBI:57945"/>
        <dbReference type="ChEBI" id="CHEBI:62192"/>
    </reaction>
</comment>
<comment type="catalytic activity">
    <reaction evidence="1">
        <text>a plastoquinone + NADPH + (n+1) H(+)(in) = a plastoquinol + NADP(+) + n H(+)(out)</text>
        <dbReference type="Rhea" id="RHEA:42612"/>
        <dbReference type="Rhea" id="RHEA-COMP:9561"/>
        <dbReference type="Rhea" id="RHEA-COMP:9562"/>
        <dbReference type="ChEBI" id="CHEBI:15378"/>
        <dbReference type="ChEBI" id="CHEBI:17757"/>
        <dbReference type="ChEBI" id="CHEBI:57783"/>
        <dbReference type="ChEBI" id="CHEBI:58349"/>
        <dbReference type="ChEBI" id="CHEBI:62192"/>
    </reaction>
</comment>
<comment type="cofactor">
    <cofactor evidence="1">
        <name>[4Fe-4S] cluster</name>
        <dbReference type="ChEBI" id="CHEBI:49883"/>
    </cofactor>
    <text evidence="1">Binds 1 [4Fe-4S] cluster.</text>
</comment>
<comment type="subunit">
    <text evidence="1">NDH is composed of at least 16 different subunits, 5 of which are encoded in the nucleus.</text>
</comment>
<comment type="subcellular location">
    <subcellularLocation>
        <location evidence="1">Plastid</location>
        <location evidence="1">Chloroplast thylakoid membrane</location>
        <topology evidence="1">Peripheral membrane protein</topology>
        <orientation evidence="1">Stromal side</orientation>
    </subcellularLocation>
</comment>
<comment type="similarity">
    <text evidence="1">Belongs to the complex I 20 kDa subunit family.</text>
</comment>
<comment type="sequence caution" evidence="2">
    <conflict type="erroneous initiation">
        <sequence resource="EMBL-CDS" id="AAS46124"/>
    </conflict>
</comment>
<comment type="sequence caution" evidence="2">
    <conflict type="erroneous initiation">
        <sequence resource="EMBL-CDS" id="CAA34000"/>
    </conflict>
</comment>
<geneLocation type="chloroplast"/>
<protein>
    <recommendedName>
        <fullName evidence="1">NAD(P)H-quinone oxidoreductase subunit K, chloroplastic</fullName>
        <ecNumber evidence="1">7.1.1.-</ecNumber>
    </recommendedName>
    <alternativeName>
        <fullName evidence="1">NAD(P)H dehydrogenase subunit K</fullName>
    </alternativeName>
    <alternativeName>
        <fullName evidence="1">NADH-plastoquinone oxidoreductase subunit K</fullName>
    </alternativeName>
</protein>
<organism>
    <name type="scientific">Oryza sativa subsp. japonica</name>
    <name type="common">Rice</name>
    <dbReference type="NCBI Taxonomy" id="39947"/>
    <lineage>
        <taxon>Eukaryota</taxon>
        <taxon>Viridiplantae</taxon>
        <taxon>Streptophyta</taxon>
        <taxon>Embryophyta</taxon>
        <taxon>Tracheophyta</taxon>
        <taxon>Spermatophyta</taxon>
        <taxon>Magnoliopsida</taxon>
        <taxon>Liliopsida</taxon>
        <taxon>Poales</taxon>
        <taxon>Poaceae</taxon>
        <taxon>BOP clade</taxon>
        <taxon>Oryzoideae</taxon>
        <taxon>Oryzeae</taxon>
        <taxon>Oryzinae</taxon>
        <taxon>Oryza</taxon>
        <taxon>Oryza sativa</taxon>
    </lineage>
</organism>
<sequence length="225" mass="25216">MSLIEFPLLDQTSSNSVISTTLKDLSNWSRLSSLWPLLYGTSCCFIEFASLIGSRFDFDRYGLVPRSSPRQADLILTAGTVTMKMAPSLVRLYEQMPEPKYVIAMGACTITGGMFSTDSYSTVRGVDKLIPVDVYLPGCPPKPEAVIDALTKLRKKISREIVEDRTLSQKKNRCFTTSHKLYVRRSTNTGTYEQELLYQSPSTLDISSETFFKSKSPVSSYKLVN</sequence>
<dbReference type="EC" id="7.1.1.-" evidence="1"/>
<dbReference type="EMBL" id="X15901">
    <property type="protein sequence ID" value="CAA34000.1"/>
    <property type="status" value="ALT_INIT"/>
    <property type="molecule type" value="Genomic_DNA"/>
</dbReference>
<dbReference type="EMBL" id="AY522330">
    <property type="protein sequence ID" value="AAS46124.1"/>
    <property type="status" value="ALT_INIT"/>
    <property type="molecule type" value="Genomic_DNA"/>
</dbReference>
<dbReference type="PIR" id="JQ0227">
    <property type="entry name" value="F2RZG"/>
</dbReference>
<dbReference type="RefSeq" id="NP_039387.2">
    <property type="nucleotide sequence ID" value="NC_001320.1"/>
</dbReference>
<dbReference type="SMR" id="P0C343"/>
<dbReference type="FunCoup" id="P0C343">
    <property type="interactions" value="61"/>
</dbReference>
<dbReference type="STRING" id="39947.P0C343"/>
<dbReference type="PaxDb" id="39947-P0C343"/>
<dbReference type="GeneID" id="3131459"/>
<dbReference type="KEGG" id="dosa:CAA34000.1"/>
<dbReference type="KEGG" id="osa:3131459"/>
<dbReference type="eggNOG" id="KOG1687">
    <property type="taxonomic scope" value="Eukaryota"/>
</dbReference>
<dbReference type="InParanoid" id="P0C343"/>
<dbReference type="OrthoDB" id="772270at2759"/>
<dbReference type="Proteomes" id="UP000059680">
    <property type="component" value="Chloroplast"/>
</dbReference>
<dbReference type="GO" id="GO:0009535">
    <property type="term" value="C:chloroplast thylakoid membrane"/>
    <property type="evidence" value="ECO:0007669"/>
    <property type="project" value="UniProtKB-SubCell"/>
</dbReference>
<dbReference type="GO" id="GO:0009536">
    <property type="term" value="C:plastid"/>
    <property type="evidence" value="ECO:0000305"/>
    <property type="project" value="Gramene"/>
</dbReference>
<dbReference type="GO" id="GO:0045271">
    <property type="term" value="C:respiratory chain complex I"/>
    <property type="evidence" value="ECO:0000318"/>
    <property type="project" value="GO_Central"/>
</dbReference>
<dbReference type="GO" id="GO:0051539">
    <property type="term" value="F:4 iron, 4 sulfur cluster binding"/>
    <property type="evidence" value="ECO:0007669"/>
    <property type="project" value="UniProtKB-KW"/>
</dbReference>
<dbReference type="GO" id="GO:0005506">
    <property type="term" value="F:iron ion binding"/>
    <property type="evidence" value="ECO:0007669"/>
    <property type="project" value="UniProtKB-UniRule"/>
</dbReference>
<dbReference type="GO" id="GO:0008137">
    <property type="term" value="F:NADH dehydrogenase (ubiquinone) activity"/>
    <property type="evidence" value="ECO:0000318"/>
    <property type="project" value="GO_Central"/>
</dbReference>
<dbReference type="GO" id="GO:0048038">
    <property type="term" value="F:quinone binding"/>
    <property type="evidence" value="ECO:0007669"/>
    <property type="project" value="UniProtKB-KW"/>
</dbReference>
<dbReference type="GO" id="GO:0009060">
    <property type="term" value="P:aerobic respiration"/>
    <property type="evidence" value="ECO:0000318"/>
    <property type="project" value="GO_Central"/>
</dbReference>
<dbReference type="GO" id="GO:0015990">
    <property type="term" value="P:electron transport coupled proton transport"/>
    <property type="evidence" value="ECO:0000318"/>
    <property type="project" value="GO_Central"/>
</dbReference>
<dbReference type="GO" id="GO:0019684">
    <property type="term" value="P:photosynthesis, light reaction"/>
    <property type="evidence" value="ECO:0007669"/>
    <property type="project" value="UniProtKB-UniRule"/>
</dbReference>
<dbReference type="FunFam" id="3.40.50.12280:FF:000003">
    <property type="entry name" value="NAD(P)H-quinone oxidoreductase subunit K, chloroplastic"/>
    <property type="match status" value="1"/>
</dbReference>
<dbReference type="Gene3D" id="3.40.50.12280">
    <property type="match status" value="1"/>
</dbReference>
<dbReference type="HAMAP" id="MF_01356">
    <property type="entry name" value="NDH1_NuoB"/>
    <property type="match status" value="1"/>
</dbReference>
<dbReference type="InterPro" id="IPR006137">
    <property type="entry name" value="NADH_UbQ_OxRdtase-like_20kDa"/>
</dbReference>
<dbReference type="InterPro" id="IPR006138">
    <property type="entry name" value="NADH_UQ_OxRdtase_20Kd_su"/>
</dbReference>
<dbReference type="NCBIfam" id="TIGR01957">
    <property type="entry name" value="nuoB_fam"/>
    <property type="match status" value="1"/>
</dbReference>
<dbReference type="NCBIfam" id="NF005012">
    <property type="entry name" value="PRK06411.1"/>
    <property type="match status" value="1"/>
</dbReference>
<dbReference type="PANTHER" id="PTHR11995">
    <property type="entry name" value="NADH DEHYDROGENASE"/>
    <property type="match status" value="1"/>
</dbReference>
<dbReference type="PANTHER" id="PTHR11995:SF14">
    <property type="entry name" value="NADH DEHYDROGENASE [UBIQUINONE] IRON-SULFUR PROTEIN 7, MITOCHONDRIAL"/>
    <property type="match status" value="1"/>
</dbReference>
<dbReference type="Pfam" id="PF01058">
    <property type="entry name" value="Oxidored_q6"/>
    <property type="match status" value="1"/>
</dbReference>
<dbReference type="SUPFAM" id="SSF56770">
    <property type="entry name" value="HydA/Nqo6-like"/>
    <property type="match status" value="1"/>
</dbReference>
<dbReference type="PROSITE" id="PS01150">
    <property type="entry name" value="COMPLEX1_20K"/>
    <property type="match status" value="1"/>
</dbReference>
<gene>
    <name evidence="1" type="primary">ndhK</name>
    <name type="synonym">psbG</name>
    <name type="ORF">Nip058</name>
</gene>
<name>NDHK_ORYSJ</name>
<proteinExistence type="inferred from homology"/>
<accession>P0C343</accession>
<accession>P12159</accession>
<accession>Q6QY07</accession>
<accession>Q6QY71</accession>
<keyword id="KW-0004">4Fe-4S</keyword>
<keyword id="KW-0150">Chloroplast</keyword>
<keyword id="KW-0408">Iron</keyword>
<keyword id="KW-0411">Iron-sulfur</keyword>
<keyword id="KW-0472">Membrane</keyword>
<keyword id="KW-0479">Metal-binding</keyword>
<keyword id="KW-0520">NAD</keyword>
<keyword id="KW-0521">NADP</keyword>
<keyword id="KW-0934">Plastid</keyword>
<keyword id="KW-0618">Plastoquinone</keyword>
<keyword id="KW-0874">Quinone</keyword>
<keyword id="KW-1185">Reference proteome</keyword>
<keyword id="KW-0793">Thylakoid</keyword>
<keyword id="KW-1278">Translocase</keyword>
<keyword id="KW-0813">Transport</keyword>
<reference key="1">
    <citation type="journal article" date="1989" name="Mol. Gen. Genet.">
        <title>The complete sequence of the rice (Oryza sativa) chloroplast genome: intermolecular recombination between distinct tRNA genes accounts for a major plastid DNA inversion during the evolution of the cereals.</title>
        <authorList>
            <person name="Hiratsuka J."/>
            <person name="Shimada H."/>
            <person name="Whittier R."/>
            <person name="Ishibashi T."/>
            <person name="Sakamoto M."/>
            <person name="Mori M."/>
            <person name="Kondo C."/>
            <person name="Honji Y."/>
            <person name="Sun C.-R."/>
            <person name="Meng B.-Y."/>
            <person name="Li Y.-Q."/>
            <person name="Kanno A."/>
            <person name="Nishizawa Y."/>
            <person name="Hirai A."/>
            <person name="Shinozaki K."/>
            <person name="Sugiura M."/>
        </authorList>
    </citation>
    <scope>NUCLEOTIDE SEQUENCE [LARGE SCALE GENOMIC DNA]</scope>
    <source>
        <strain>cv. Nipponbare</strain>
    </source>
</reference>
<reference key="2">
    <citation type="journal article" date="2004" name="Plant Physiol.">
        <title>A comparison of rice chloroplast genomes.</title>
        <authorList>
            <person name="Tang J."/>
            <person name="Xia H."/>
            <person name="Cao M."/>
            <person name="Zhang X."/>
            <person name="Zeng W."/>
            <person name="Hu S."/>
            <person name="Tong W."/>
            <person name="Wang J."/>
            <person name="Wang J."/>
            <person name="Yu J."/>
            <person name="Yang H."/>
            <person name="Zhu L."/>
        </authorList>
    </citation>
    <scope>NUCLEOTIDE SEQUENCE [LARGE SCALE GENOMIC DNA]</scope>
    <source>
        <strain>cv. Nipponbare</strain>
    </source>
</reference>